<sequence length="341" mass="39668">FVMKREPLRFRDITVEGNENAYIKNGKLHLSLMDPSTLSLVTKADGKIDMTVDLISPVTKRASLKIDSKKYNLFHEGELSASIVNPRLSWHQYTKRDSREYKSDVELSLRSSDIALKITMPDYNSKIHYSRQGDQINMDIDGTLIEGHAQGTIREGKIHIKGRQTDFEIESNYRYEDGKLIIEPVKSENGKLEGVLSRKVPSHLTLETPRVKMNMKYDRYAPVKVFKLDYDGIHFEKHTDIEYEPGVRYKIIGNGKLKDDGRHYSIDVQGIPRKAFNLDADLMDFKLKVSKPEDSNKAQFSYTFNEYTETEEYEFDPHRAYYVNWLSSIRKYIQNFIVEDN</sequence>
<name>MAG_DERFA</name>
<comment type="allergen">
    <text>Causes an allergic reaction in human. Binds to IgE. Has a potent ability to release histamine from washed blood cells of the mite-allergic patients.</text>
</comment>
<reference key="1">
    <citation type="journal article" date="1994" name="Int. Arch. Allergy Immunol.">
        <title>Cloning and characterization of cDNA coding for a new allergen from the house dust mite, Dermatophagoides farinae.</title>
        <authorList>
            <person name="Aki T."/>
            <person name="Ono K."/>
            <person name="Paik S.-Y."/>
            <person name="Wada T."/>
            <person name="Jyo T."/>
            <person name="Shigeta S."/>
            <person name="Murooka Y."/>
            <person name="Oka S."/>
        </authorList>
    </citation>
    <scope>NUCLEOTIDE SEQUENCE [MRNA]</scope>
</reference>
<keyword id="KW-0020">Allergen</keyword>
<accession>P39673</accession>
<proteinExistence type="evidence at protein level"/>
<feature type="chain" id="PRO_0000084551" description="Allergen Mag">
    <location>
        <begin position="1" status="less than"/>
        <end position="341"/>
    </location>
</feature>
<feature type="non-terminal residue">
    <location>
        <position position="1"/>
    </location>
</feature>
<protein>
    <recommendedName>
        <fullName>Allergen Mag</fullName>
    </recommendedName>
    <allergenName>Der f 14</allergenName>
</protein>
<dbReference type="EMBL" id="D13961">
    <property type="protein sequence ID" value="BAA03064.1"/>
    <property type="molecule type" value="mRNA"/>
</dbReference>
<dbReference type="Allergome" id="298">
    <property type="allergen name" value="Der f 14"/>
</dbReference>
<dbReference type="OrthoDB" id="6374144at2759"/>
<gene>
    <name type="primary">MAG</name>
</gene>
<organism>
    <name type="scientific">Dermatophagoides farinae</name>
    <name type="common">American house dust mite</name>
    <dbReference type="NCBI Taxonomy" id="6954"/>
    <lineage>
        <taxon>Eukaryota</taxon>
        <taxon>Metazoa</taxon>
        <taxon>Ecdysozoa</taxon>
        <taxon>Arthropoda</taxon>
        <taxon>Chelicerata</taxon>
        <taxon>Arachnida</taxon>
        <taxon>Acari</taxon>
        <taxon>Acariformes</taxon>
        <taxon>Sarcoptiformes</taxon>
        <taxon>Astigmata</taxon>
        <taxon>Psoroptidia</taxon>
        <taxon>Analgoidea</taxon>
        <taxon>Pyroglyphidae</taxon>
        <taxon>Dermatophagoidinae</taxon>
        <taxon>Dermatophagoides</taxon>
    </lineage>
</organism>